<keyword id="KW-0175">Coiled coil</keyword>
<keyword id="KW-1185">Reference proteome</keyword>
<proteinExistence type="predicted"/>
<feature type="chain" id="PRO_0000410541" description="Uncharacterized protein 89R">
    <location>
        <begin position="1"/>
        <end position="388"/>
    </location>
</feature>
<feature type="region of interest" description="Disordered" evidence="2">
    <location>
        <begin position="162"/>
        <end position="388"/>
    </location>
</feature>
<feature type="coiled-coil region" evidence="1">
    <location>
        <begin position="68"/>
        <end position="96"/>
    </location>
</feature>
<feature type="compositionally biased region" description="Basic and acidic residues" evidence="2">
    <location>
        <begin position="166"/>
        <end position="176"/>
    </location>
</feature>
<feature type="compositionally biased region" description="Basic and acidic residues" evidence="2">
    <location>
        <begin position="196"/>
        <end position="208"/>
    </location>
</feature>
<feature type="compositionally biased region" description="Basic residues" evidence="2">
    <location>
        <begin position="233"/>
        <end position="251"/>
    </location>
</feature>
<feature type="compositionally biased region" description="Low complexity" evidence="2">
    <location>
        <begin position="265"/>
        <end position="279"/>
    </location>
</feature>
<feature type="compositionally biased region" description="Low complexity" evidence="2">
    <location>
        <begin position="293"/>
        <end position="346"/>
    </location>
</feature>
<organism>
    <name type="scientific">Frog virus 3 (isolate Goorha)</name>
    <name type="common">FV-3</name>
    <dbReference type="NCBI Taxonomy" id="654924"/>
    <lineage>
        <taxon>Viruses</taxon>
        <taxon>Varidnaviria</taxon>
        <taxon>Bamfordvirae</taxon>
        <taxon>Nucleocytoviricota</taxon>
        <taxon>Megaviricetes</taxon>
        <taxon>Pimascovirales</taxon>
        <taxon>Iridoviridae</taxon>
        <taxon>Alphairidovirinae</taxon>
        <taxon>Ranavirus</taxon>
        <taxon>Frog virus 3</taxon>
    </lineage>
</organism>
<gene>
    <name type="ORF">FV3-089R</name>
</gene>
<dbReference type="EMBL" id="AY548484">
    <property type="protein sequence ID" value="AAT09749.1"/>
    <property type="molecule type" value="Genomic_DNA"/>
</dbReference>
<dbReference type="RefSeq" id="YP_031668.1">
    <property type="nucleotide sequence ID" value="NC_005946.1"/>
</dbReference>
<dbReference type="SMR" id="Q6GZN6"/>
<dbReference type="KEGG" id="vg:2947808"/>
<dbReference type="Proteomes" id="UP000008770">
    <property type="component" value="Segment"/>
</dbReference>
<dbReference type="InterPro" id="IPR045411">
    <property type="entry name" value="DUF5892"/>
</dbReference>
<dbReference type="Pfam" id="PF19243">
    <property type="entry name" value="DUF5892"/>
    <property type="match status" value="1"/>
</dbReference>
<protein>
    <recommendedName>
        <fullName>Uncharacterized protein 89R</fullName>
    </recommendedName>
</protein>
<accession>Q6GZN6</accession>
<sequence length="388" mass="44237">MACYSPRCDSPYPYADWDDCESVSSLGSFGCDYDHHEEASFQDPLAVGDDDVFEEPERVHGPIVDICKVDRMSEEEERMAIATRKAKEVAKELSETMSGKLRWLSDFTCDKPGPKRRKKKGLSMVDYPTLGSEAPAGSRIKMSKIGKGCTLVMASGGTRVEGSHPLVREFNGEKPPKNVGRKSGPAWFGYLSAKNATDKKTGSKQSDKEVEDDWTFVSKKGKGIQPEDAKPQGVKHQHAIRRDDRHRHGMRGTRYGAPNYGYRYQQQQCPVQGQQSRGQWQRRHCEGEGQWTQRRPAQQQQRPAQQQQRPAQQQQRPAQQQQRPAQQQQRPAQQQQRPAQQQQRPAQQPPQKPLRKRKPPPTNQRIVKPQKPKTPEPQPPQQDWFDSV</sequence>
<organismHost>
    <name type="scientific">Dryophytes versicolor</name>
    <name type="common">chameleon treefrog</name>
    <dbReference type="NCBI Taxonomy" id="30343"/>
</organismHost>
<organismHost>
    <name type="scientific">Lithobates pipiens</name>
    <name type="common">Northern leopard frog</name>
    <name type="synonym">Rana pipiens</name>
    <dbReference type="NCBI Taxonomy" id="8404"/>
</organismHost>
<organismHost>
    <name type="scientific">Lithobates sylvaticus</name>
    <name type="common">Wood frog</name>
    <name type="synonym">Rana sylvatica</name>
    <dbReference type="NCBI Taxonomy" id="45438"/>
</organismHost>
<organismHost>
    <name type="scientific">Notophthalmus viridescens</name>
    <name type="common">Eastern newt</name>
    <name type="synonym">Triturus viridescens</name>
    <dbReference type="NCBI Taxonomy" id="8316"/>
</organismHost>
<evidence type="ECO:0000255" key="1"/>
<evidence type="ECO:0000256" key="2">
    <source>
        <dbReference type="SAM" id="MobiDB-lite"/>
    </source>
</evidence>
<name>089R_FRG3G</name>
<reference key="1">
    <citation type="journal article" date="2004" name="Virology">
        <title>Comparative genomic analyses of frog virus 3, type species of the genus Ranavirus (family Iridoviridae).</title>
        <authorList>
            <person name="Tan W.G."/>
            <person name="Barkman T.J."/>
            <person name="Gregory Chinchar V."/>
            <person name="Essani K."/>
        </authorList>
    </citation>
    <scope>NUCLEOTIDE SEQUENCE [LARGE SCALE GENOMIC DNA]</scope>
</reference>